<dbReference type="EMBL" id="AL021637">
    <property type="protein sequence ID" value="CAA16601.1"/>
    <property type="molecule type" value="Genomic_DNA"/>
</dbReference>
<dbReference type="EMBL" id="AL161551">
    <property type="protein sequence ID" value="CAB78993.1"/>
    <property type="molecule type" value="Genomic_DNA"/>
</dbReference>
<dbReference type="EMBL" id="CP002687">
    <property type="protein sequence ID" value="AEE84248.1"/>
    <property type="molecule type" value="Genomic_DNA"/>
</dbReference>
<dbReference type="PIR" id="T04877">
    <property type="entry name" value="T04877"/>
</dbReference>
<dbReference type="RefSeq" id="NP_193726.1">
    <property type="nucleotide sequence ID" value="NM_118111.1"/>
</dbReference>
<dbReference type="BioGRID" id="13030">
    <property type="interactions" value="2"/>
</dbReference>
<dbReference type="FunCoup" id="O49420">
    <property type="interactions" value="10"/>
</dbReference>
<dbReference type="iPTMnet" id="O49420"/>
<dbReference type="PaxDb" id="3702-AT4G19930.1"/>
<dbReference type="DNASU" id="827737"/>
<dbReference type="EnsemblPlants" id="AT4G19930.1">
    <property type="protein sequence ID" value="AT4G19930.1"/>
    <property type="gene ID" value="AT4G19930"/>
</dbReference>
<dbReference type="GeneID" id="827737"/>
<dbReference type="Gramene" id="AT4G19930.1">
    <property type="protein sequence ID" value="AT4G19930.1"/>
    <property type="gene ID" value="AT4G19930"/>
</dbReference>
<dbReference type="KEGG" id="ath:AT4G19930"/>
<dbReference type="Araport" id="AT4G19930"/>
<dbReference type="TAIR" id="AT4G19930"/>
<dbReference type="HOGENOM" id="CLU_027176_8_2_1"/>
<dbReference type="InParanoid" id="O49420"/>
<dbReference type="OMA" id="VPQHITR"/>
<dbReference type="PhylomeDB" id="O49420"/>
<dbReference type="PRO" id="PR:O49420"/>
<dbReference type="Proteomes" id="UP000006548">
    <property type="component" value="Chromosome 4"/>
</dbReference>
<dbReference type="ExpressionAtlas" id="O49420">
    <property type="expression patterns" value="differential"/>
</dbReference>
<dbReference type="CDD" id="cd22157">
    <property type="entry name" value="F-box_AtFBW1-like"/>
    <property type="match status" value="1"/>
</dbReference>
<dbReference type="Gene3D" id="1.20.1280.50">
    <property type="match status" value="1"/>
</dbReference>
<dbReference type="InterPro" id="IPR013187">
    <property type="entry name" value="F-box-assoc_dom_typ3"/>
</dbReference>
<dbReference type="InterPro" id="IPR017451">
    <property type="entry name" value="F-box-assoc_interact_dom"/>
</dbReference>
<dbReference type="InterPro" id="IPR036047">
    <property type="entry name" value="F-box-like_dom_sf"/>
</dbReference>
<dbReference type="InterPro" id="IPR001810">
    <property type="entry name" value="F-box_dom"/>
</dbReference>
<dbReference type="NCBIfam" id="TIGR01640">
    <property type="entry name" value="F_box_assoc_1"/>
    <property type="match status" value="1"/>
</dbReference>
<dbReference type="PANTHER" id="PTHR31111">
    <property type="entry name" value="BNAA05G37150D PROTEIN-RELATED"/>
    <property type="match status" value="1"/>
</dbReference>
<dbReference type="PANTHER" id="PTHR31111:SF17">
    <property type="entry name" value="F-BOX DOMAIN-CONTAINING PROTEIN"/>
    <property type="match status" value="1"/>
</dbReference>
<dbReference type="Pfam" id="PF00646">
    <property type="entry name" value="F-box"/>
    <property type="match status" value="1"/>
</dbReference>
<dbReference type="Pfam" id="PF08268">
    <property type="entry name" value="FBA_3"/>
    <property type="match status" value="1"/>
</dbReference>
<dbReference type="SMART" id="SM00256">
    <property type="entry name" value="FBOX"/>
    <property type="match status" value="1"/>
</dbReference>
<dbReference type="SUPFAM" id="SSF81383">
    <property type="entry name" value="F-box domain"/>
    <property type="match status" value="1"/>
</dbReference>
<dbReference type="PROSITE" id="PS50181">
    <property type="entry name" value="FBOX"/>
    <property type="match status" value="1"/>
</dbReference>
<organism>
    <name type="scientific">Arabidopsis thaliana</name>
    <name type="common">Mouse-ear cress</name>
    <dbReference type="NCBI Taxonomy" id="3702"/>
    <lineage>
        <taxon>Eukaryota</taxon>
        <taxon>Viridiplantae</taxon>
        <taxon>Streptophyta</taxon>
        <taxon>Embryophyta</taxon>
        <taxon>Tracheophyta</taxon>
        <taxon>Spermatophyta</taxon>
        <taxon>Magnoliopsida</taxon>
        <taxon>eudicotyledons</taxon>
        <taxon>Gunneridae</taxon>
        <taxon>Pentapetalae</taxon>
        <taxon>rosids</taxon>
        <taxon>malvids</taxon>
        <taxon>Brassicales</taxon>
        <taxon>Brassicaceae</taxon>
        <taxon>Camelineae</taxon>
        <taxon>Arabidopsis</taxon>
    </lineage>
</organism>
<sequence>MAFSFDLAVIFQRERRMKRKSRVTIRRRRRRDMCKSHEPMPYIPFDLVIEILTRLPAKSLMRFKSVSKLWSSLICSRTFTNRLLRVPSFIQRLYVTLTFLDNSLQRKSKLLSSSSSPGSDISTMSSFVVDRDLTTPSMKGYYLSHVLRGLMCFVKEPSVKIYNTTTRQLVVLPDIEESNIIAEDHKNKKIMYRIGHDPVGDQYKVVCIVARPNDEFGELRRYLSEHWVFILGGDKSSGWRKIPCPSPHLPITQILSINGRMHYLAWVQKFDPMLVTFDFSSEEISILQAPEDIRWFKSNPIEYYGKVALLNLSDLKRECTMNLWVMEDVEKNMWSEKTLVVHPSQMDIVKSTSLRVAGTTRNNEVILVPHNIRYTLTGEVIVEPQNTTLLYIFLYDLQKNLMRKVEIKEPPYHTKFWDVVGLDDVENFMYL</sequence>
<name>FBK86_ARATH</name>
<protein>
    <recommendedName>
        <fullName>F-box/kelch-repeat protein At4g19930</fullName>
    </recommendedName>
</protein>
<accession>O49420</accession>
<feature type="chain" id="PRO_0000283244" description="F-box/kelch-repeat protein At4g19930">
    <location>
        <begin position="1"/>
        <end position="431"/>
    </location>
</feature>
<feature type="domain" description="F-box" evidence="1">
    <location>
        <begin position="37"/>
        <end position="83"/>
    </location>
</feature>
<feature type="repeat" description="Kelch 1">
    <location>
        <begin position="143"/>
        <end position="189"/>
    </location>
</feature>
<feature type="repeat" description="Kelch 2">
    <location>
        <begin position="227"/>
        <end position="275"/>
    </location>
</feature>
<reference key="1">
    <citation type="journal article" date="1999" name="Nature">
        <title>Sequence and analysis of chromosome 4 of the plant Arabidopsis thaliana.</title>
        <authorList>
            <person name="Mayer K.F.X."/>
            <person name="Schueller C."/>
            <person name="Wambutt R."/>
            <person name="Murphy G."/>
            <person name="Volckaert G."/>
            <person name="Pohl T."/>
            <person name="Duesterhoeft A."/>
            <person name="Stiekema W."/>
            <person name="Entian K.-D."/>
            <person name="Terryn N."/>
            <person name="Harris B."/>
            <person name="Ansorge W."/>
            <person name="Brandt P."/>
            <person name="Grivell L.A."/>
            <person name="Rieger M."/>
            <person name="Weichselgartner M."/>
            <person name="de Simone V."/>
            <person name="Obermaier B."/>
            <person name="Mache R."/>
            <person name="Mueller M."/>
            <person name="Kreis M."/>
            <person name="Delseny M."/>
            <person name="Puigdomenech P."/>
            <person name="Watson M."/>
            <person name="Schmidtheini T."/>
            <person name="Reichert B."/>
            <person name="Portetelle D."/>
            <person name="Perez-Alonso M."/>
            <person name="Boutry M."/>
            <person name="Bancroft I."/>
            <person name="Vos P."/>
            <person name="Hoheisel J."/>
            <person name="Zimmermann W."/>
            <person name="Wedler H."/>
            <person name="Ridley P."/>
            <person name="Langham S.-A."/>
            <person name="McCullagh B."/>
            <person name="Bilham L."/>
            <person name="Robben J."/>
            <person name="van der Schueren J."/>
            <person name="Grymonprez B."/>
            <person name="Chuang Y.-J."/>
            <person name="Vandenbussche F."/>
            <person name="Braeken M."/>
            <person name="Weltjens I."/>
            <person name="Voet M."/>
            <person name="Bastiaens I."/>
            <person name="Aert R."/>
            <person name="Defoor E."/>
            <person name="Weitzenegger T."/>
            <person name="Bothe G."/>
            <person name="Ramsperger U."/>
            <person name="Hilbert H."/>
            <person name="Braun M."/>
            <person name="Holzer E."/>
            <person name="Brandt A."/>
            <person name="Peters S."/>
            <person name="van Staveren M."/>
            <person name="Dirkse W."/>
            <person name="Mooijman P."/>
            <person name="Klein Lankhorst R."/>
            <person name="Rose M."/>
            <person name="Hauf J."/>
            <person name="Koetter P."/>
            <person name="Berneiser S."/>
            <person name="Hempel S."/>
            <person name="Feldpausch M."/>
            <person name="Lamberth S."/>
            <person name="Van den Daele H."/>
            <person name="De Keyser A."/>
            <person name="Buysshaert C."/>
            <person name="Gielen J."/>
            <person name="Villarroel R."/>
            <person name="De Clercq R."/>
            <person name="van Montagu M."/>
            <person name="Rogers J."/>
            <person name="Cronin A."/>
            <person name="Quail M.A."/>
            <person name="Bray-Allen S."/>
            <person name="Clark L."/>
            <person name="Doggett J."/>
            <person name="Hall S."/>
            <person name="Kay M."/>
            <person name="Lennard N."/>
            <person name="McLay K."/>
            <person name="Mayes R."/>
            <person name="Pettett A."/>
            <person name="Rajandream M.A."/>
            <person name="Lyne M."/>
            <person name="Benes V."/>
            <person name="Rechmann S."/>
            <person name="Borkova D."/>
            <person name="Bloecker H."/>
            <person name="Scharfe M."/>
            <person name="Grimm M."/>
            <person name="Loehnert T.-H."/>
            <person name="Dose S."/>
            <person name="de Haan M."/>
            <person name="Maarse A.C."/>
            <person name="Schaefer M."/>
            <person name="Mueller-Auer S."/>
            <person name="Gabel C."/>
            <person name="Fuchs M."/>
            <person name="Fartmann B."/>
            <person name="Granderath K."/>
            <person name="Dauner D."/>
            <person name="Herzl A."/>
            <person name="Neumann S."/>
            <person name="Argiriou A."/>
            <person name="Vitale D."/>
            <person name="Liguori R."/>
            <person name="Piravandi E."/>
            <person name="Massenet O."/>
            <person name="Quigley F."/>
            <person name="Clabauld G."/>
            <person name="Muendlein A."/>
            <person name="Felber R."/>
            <person name="Schnabl S."/>
            <person name="Hiller R."/>
            <person name="Schmidt W."/>
            <person name="Lecharny A."/>
            <person name="Aubourg S."/>
            <person name="Chefdor F."/>
            <person name="Cooke R."/>
            <person name="Berger C."/>
            <person name="Monfort A."/>
            <person name="Casacuberta E."/>
            <person name="Gibbons T."/>
            <person name="Weber N."/>
            <person name="Vandenbol M."/>
            <person name="Bargues M."/>
            <person name="Terol J."/>
            <person name="Torres A."/>
            <person name="Perez-Perez A."/>
            <person name="Purnelle B."/>
            <person name="Bent E."/>
            <person name="Johnson S."/>
            <person name="Tacon D."/>
            <person name="Jesse T."/>
            <person name="Heijnen L."/>
            <person name="Schwarz S."/>
            <person name="Scholler P."/>
            <person name="Heber S."/>
            <person name="Francs P."/>
            <person name="Bielke C."/>
            <person name="Frishman D."/>
            <person name="Haase D."/>
            <person name="Lemcke K."/>
            <person name="Mewes H.-W."/>
            <person name="Stocker S."/>
            <person name="Zaccaria P."/>
            <person name="Bevan M."/>
            <person name="Wilson R.K."/>
            <person name="de la Bastide M."/>
            <person name="Habermann K."/>
            <person name="Parnell L."/>
            <person name="Dedhia N."/>
            <person name="Gnoj L."/>
            <person name="Schutz K."/>
            <person name="Huang E."/>
            <person name="Spiegel L."/>
            <person name="Sekhon M."/>
            <person name="Murray J."/>
            <person name="Sheet P."/>
            <person name="Cordes M."/>
            <person name="Abu-Threideh J."/>
            <person name="Stoneking T."/>
            <person name="Kalicki J."/>
            <person name="Graves T."/>
            <person name="Harmon G."/>
            <person name="Edwards J."/>
            <person name="Latreille P."/>
            <person name="Courtney L."/>
            <person name="Cloud J."/>
            <person name="Abbott A."/>
            <person name="Scott K."/>
            <person name="Johnson D."/>
            <person name="Minx P."/>
            <person name="Bentley D."/>
            <person name="Fulton B."/>
            <person name="Miller N."/>
            <person name="Greco T."/>
            <person name="Kemp K."/>
            <person name="Kramer J."/>
            <person name="Fulton L."/>
            <person name="Mardis E."/>
            <person name="Dante M."/>
            <person name="Pepin K."/>
            <person name="Hillier L.W."/>
            <person name="Nelson J."/>
            <person name="Spieth J."/>
            <person name="Ryan E."/>
            <person name="Andrews S."/>
            <person name="Geisel C."/>
            <person name="Layman D."/>
            <person name="Du H."/>
            <person name="Ali J."/>
            <person name="Berghoff A."/>
            <person name="Jones K."/>
            <person name="Drone K."/>
            <person name="Cotton M."/>
            <person name="Joshu C."/>
            <person name="Antonoiu B."/>
            <person name="Zidanic M."/>
            <person name="Strong C."/>
            <person name="Sun H."/>
            <person name="Lamar B."/>
            <person name="Yordan C."/>
            <person name="Ma P."/>
            <person name="Zhong J."/>
            <person name="Preston R."/>
            <person name="Vil D."/>
            <person name="Shekher M."/>
            <person name="Matero A."/>
            <person name="Shah R."/>
            <person name="Swaby I.K."/>
            <person name="O'Shaughnessy A."/>
            <person name="Rodriguez M."/>
            <person name="Hoffman J."/>
            <person name="Till S."/>
            <person name="Granat S."/>
            <person name="Shohdy N."/>
            <person name="Hasegawa A."/>
            <person name="Hameed A."/>
            <person name="Lodhi M."/>
            <person name="Johnson A."/>
            <person name="Chen E."/>
            <person name="Marra M.A."/>
            <person name="Martienssen R."/>
            <person name="McCombie W.R."/>
        </authorList>
    </citation>
    <scope>NUCLEOTIDE SEQUENCE [LARGE SCALE GENOMIC DNA]</scope>
    <source>
        <strain>cv. Columbia</strain>
    </source>
</reference>
<reference key="2">
    <citation type="journal article" date="2017" name="Plant J.">
        <title>Araport11: a complete reannotation of the Arabidopsis thaliana reference genome.</title>
        <authorList>
            <person name="Cheng C.Y."/>
            <person name="Krishnakumar V."/>
            <person name="Chan A.P."/>
            <person name="Thibaud-Nissen F."/>
            <person name="Schobel S."/>
            <person name="Town C.D."/>
        </authorList>
    </citation>
    <scope>GENOME REANNOTATION</scope>
    <source>
        <strain>cv. Columbia</strain>
    </source>
</reference>
<proteinExistence type="predicted"/>
<keyword id="KW-0880">Kelch repeat</keyword>
<keyword id="KW-1185">Reference proteome</keyword>
<keyword id="KW-0677">Repeat</keyword>
<evidence type="ECO:0000255" key="1">
    <source>
        <dbReference type="PROSITE-ProRule" id="PRU00080"/>
    </source>
</evidence>
<gene>
    <name type="ordered locus">At4g19930</name>
    <name type="ORF">F18F4.30</name>
</gene>